<reference key="1">
    <citation type="journal article" date="2006" name="Virology">
        <title>Polydnavirus genomes reflect their dual roles as mutualists and pathogens.</title>
        <authorList>
            <person name="Webb B.A."/>
            <person name="Strand M.R."/>
            <person name="Dickey S.E."/>
            <person name="Beck M.H."/>
            <person name="Hilgarth R.S."/>
            <person name="Barney W.E."/>
            <person name="Kadash K."/>
            <person name="Kroemer J.A."/>
            <person name="Lindstrom K.G."/>
            <person name="Rattanadechakul W."/>
            <person name="Shelby K.S."/>
            <person name="Thoetkiattikul H."/>
            <person name="Turnbull M.W."/>
            <person name="Witherell R.A."/>
        </authorList>
    </citation>
    <scope>NUCLEOTIDE SEQUENCE [GENOMIC DNA]</scope>
</reference>
<protein>
    <recommendedName>
        <fullName>Uncharacterized protein D2</fullName>
    </recommendedName>
</protein>
<gene>
    <name type="primary">D2</name>
</gene>
<accession>Q5I153</accession>
<organismHost>
    <name type="scientific">Microplitis demolitor</name>
    <name type="common">Parasitoid wasp</name>
    <dbReference type="NCBI Taxonomy" id="69319"/>
</organismHost>
<keyword id="KW-1185">Reference proteome</keyword>
<organism>
    <name type="scientific">Microplitis demolitor bracovirus (isolate Webb)</name>
    <name type="common">MdBV</name>
    <dbReference type="NCBI Taxonomy" id="654919"/>
    <lineage>
        <taxon>Viruses</taxon>
        <taxon>Viruses incertae sedis</taxon>
        <taxon>Polydnaviriformidae</taxon>
        <taxon>Bracoviriform</taxon>
        <taxon>Microplitis demolitor bracovirus</taxon>
    </lineage>
</organism>
<dbReference type="EMBL" id="AY875683">
    <property type="protein sequence ID" value="AAW51779.1"/>
    <property type="molecule type" value="Genomic_DNA"/>
</dbReference>
<dbReference type="RefSeq" id="YP_239375.1">
    <property type="nucleotide sequence ID" value="NC_007033.1"/>
</dbReference>
<dbReference type="SMR" id="Q5I153"/>
<dbReference type="KEGG" id="vg:5075811"/>
<dbReference type="Proteomes" id="UP000008168">
    <property type="component" value="Genome"/>
</dbReference>
<sequence>MADNKKSMSRAISEDSNLYNKISGTKRAYSDLHHSNSSIYSAKSFGSSVTIYCAVGNDQQTALVNQNDQFYKNQFMIRASSYPTLVSPVSTENQLSQQLRPHISEAAEVLHQYIAKRSRKN</sequence>
<proteinExistence type="predicted"/>
<feature type="chain" id="PRO_0000405393" description="Uncharacterized protein D2">
    <location>
        <begin position="1"/>
        <end position="121"/>
    </location>
</feature>
<name>YD2_MDBVW</name>